<organism>
    <name type="scientific">Burkholderia pseudomallei (strain 668)</name>
    <dbReference type="NCBI Taxonomy" id="320373"/>
    <lineage>
        <taxon>Bacteria</taxon>
        <taxon>Pseudomonadati</taxon>
        <taxon>Pseudomonadota</taxon>
        <taxon>Betaproteobacteria</taxon>
        <taxon>Burkholderiales</taxon>
        <taxon>Burkholderiaceae</taxon>
        <taxon>Burkholderia</taxon>
        <taxon>pseudomallei group</taxon>
    </lineage>
</organism>
<proteinExistence type="inferred from homology"/>
<gene>
    <name evidence="1" type="primary">aspS</name>
    <name type="ordered locus">BURPS668_0675</name>
</gene>
<name>SYDND_BURP6</name>
<reference key="1">
    <citation type="journal article" date="2010" name="Genome Biol. Evol.">
        <title>Continuing evolution of Burkholderia mallei through genome reduction and large-scale rearrangements.</title>
        <authorList>
            <person name="Losada L."/>
            <person name="Ronning C.M."/>
            <person name="DeShazer D."/>
            <person name="Woods D."/>
            <person name="Fedorova N."/>
            <person name="Kim H.S."/>
            <person name="Shabalina S.A."/>
            <person name="Pearson T.R."/>
            <person name="Brinkac L."/>
            <person name="Tan P."/>
            <person name="Nandi T."/>
            <person name="Crabtree J."/>
            <person name="Badger J."/>
            <person name="Beckstrom-Sternberg S."/>
            <person name="Saqib M."/>
            <person name="Schutzer S.E."/>
            <person name="Keim P."/>
            <person name="Nierman W.C."/>
        </authorList>
    </citation>
    <scope>NUCLEOTIDE SEQUENCE [LARGE SCALE GENOMIC DNA]</scope>
    <source>
        <strain>668</strain>
    </source>
</reference>
<comment type="function">
    <text evidence="1">Aspartyl-tRNA synthetase with relaxed tRNA specificity since it is able to aspartylate not only its cognate tRNA(Asp) but also tRNA(Asn). Reaction proceeds in two steps: L-aspartate is first activated by ATP to form Asp-AMP and then transferred to the acceptor end of tRNA(Asp/Asn).</text>
</comment>
<comment type="catalytic activity">
    <reaction evidence="1">
        <text>tRNA(Asx) + L-aspartate + ATP = L-aspartyl-tRNA(Asx) + AMP + diphosphate</text>
        <dbReference type="Rhea" id="RHEA:18349"/>
        <dbReference type="Rhea" id="RHEA-COMP:9710"/>
        <dbReference type="Rhea" id="RHEA-COMP:9711"/>
        <dbReference type="ChEBI" id="CHEBI:29991"/>
        <dbReference type="ChEBI" id="CHEBI:30616"/>
        <dbReference type="ChEBI" id="CHEBI:33019"/>
        <dbReference type="ChEBI" id="CHEBI:78442"/>
        <dbReference type="ChEBI" id="CHEBI:78516"/>
        <dbReference type="ChEBI" id="CHEBI:456215"/>
        <dbReference type="EC" id="6.1.1.23"/>
    </reaction>
</comment>
<comment type="subunit">
    <text evidence="1">Homodimer.</text>
</comment>
<comment type="subcellular location">
    <subcellularLocation>
        <location evidence="1">Cytoplasm</location>
    </subcellularLocation>
</comment>
<comment type="similarity">
    <text evidence="1">Belongs to the class-II aminoacyl-tRNA synthetase family. Type 1 subfamily.</text>
</comment>
<evidence type="ECO:0000255" key="1">
    <source>
        <dbReference type="HAMAP-Rule" id="MF_00044"/>
    </source>
</evidence>
<sequence length="600" mass="67738">MSMRTEYCGLVTEHLLGQTVSLCGWVHRRRDHGGVIFIDLRDREGLVQVVCDPDRAEMFAAAEGVRNEFCIQVKGLVRGRPEGTINAGLKSGRIEVLCHELNVLNASVTPPFQLDDDNLSETTRLTHRVLDLRRPQMQHNLRLRYRVAIEARKYLDEQGFIDIETPMLTKSTPEGARDYLVPSRVNAGQFFALPQSPQLFKQLLMVANFDRYYQITKCFRDEDLRADRQPEFTQIDCETSFLGEQEIRDLFEDMIRHIFKTTIDVELDATFPVMPYSEAMARFGSDKPDLRVKLEFTELTDAMKDVDFKVFSTPANTKDGRVAALRVPKGGELTRGDIDGYTEFVRIYGAKGLAWIKVNERAKGRDGLQSPIVKNLHDASIAAILERTGAQDGDIIFFAADRAKVVNDSLGALRLKIGHSEFGKANGLVEAGWKPLWVVDFPMFEYDDEEARYVAAHHPFTSPKDEHLEYLETDPGRCLAKAYDMVLNGWEIGGGSVRIHREEVQSKVFRALKIGPEEAQAKFGFLLDALQYGAPPHGGIAFGLDRIVTMMAGADSIRDVIAFPKTQRAQCLLTQAPSPVDERQLRELHIRLRQPEQPKA</sequence>
<dbReference type="EC" id="6.1.1.23" evidence="1"/>
<dbReference type="EMBL" id="CP000570">
    <property type="protein sequence ID" value="ABN83879.1"/>
    <property type="molecule type" value="Genomic_DNA"/>
</dbReference>
<dbReference type="RefSeq" id="WP_011851090.1">
    <property type="nucleotide sequence ID" value="NC_009074.1"/>
</dbReference>
<dbReference type="SMR" id="A3N5V6"/>
<dbReference type="KEGG" id="bpd:BURPS668_0675"/>
<dbReference type="HOGENOM" id="CLU_014330_3_2_4"/>
<dbReference type="GO" id="GO:0005737">
    <property type="term" value="C:cytoplasm"/>
    <property type="evidence" value="ECO:0007669"/>
    <property type="project" value="UniProtKB-SubCell"/>
</dbReference>
<dbReference type="GO" id="GO:0004815">
    <property type="term" value="F:aspartate-tRNA ligase activity"/>
    <property type="evidence" value="ECO:0007669"/>
    <property type="project" value="UniProtKB-UniRule"/>
</dbReference>
<dbReference type="GO" id="GO:0050560">
    <property type="term" value="F:aspartate-tRNA(Asn) ligase activity"/>
    <property type="evidence" value="ECO:0007669"/>
    <property type="project" value="UniProtKB-EC"/>
</dbReference>
<dbReference type="GO" id="GO:0005524">
    <property type="term" value="F:ATP binding"/>
    <property type="evidence" value="ECO:0007669"/>
    <property type="project" value="UniProtKB-UniRule"/>
</dbReference>
<dbReference type="GO" id="GO:0003676">
    <property type="term" value="F:nucleic acid binding"/>
    <property type="evidence" value="ECO:0007669"/>
    <property type="project" value="InterPro"/>
</dbReference>
<dbReference type="GO" id="GO:0006422">
    <property type="term" value="P:aspartyl-tRNA aminoacylation"/>
    <property type="evidence" value="ECO:0007669"/>
    <property type="project" value="UniProtKB-UniRule"/>
</dbReference>
<dbReference type="CDD" id="cd00777">
    <property type="entry name" value="AspRS_core"/>
    <property type="match status" value="1"/>
</dbReference>
<dbReference type="CDD" id="cd04317">
    <property type="entry name" value="EcAspRS_like_N"/>
    <property type="match status" value="1"/>
</dbReference>
<dbReference type="Gene3D" id="3.30.930.10">
    <property type="entry name" value="Bira Bifunctional Protein, Domain 2"/>
    <property type="match status" value="1"/>
</dbReference>
<dbReference type="Gene3D" id="3.30.1360.30">
    <property type="entry name" value="GAD-like domain"/>
    <property type="match status" value="1"/>
</dbReference>
<dbReference type="Gene3D" id="2.40.50.140">
    <property type="entry name" value="Nucleic acid-binding proteins"/>
    <property type="match status" value="1"/>
</dbReference>
<dbReference type="HAMAP" id="MF_00044">
    <property type="entry name" value="Asp_tRNA_synth_type1"/>
    <property type="match status" value="1"/>
</dbReference>
<dbReference type="InterPro" id="IPR004364">
    <property type="entry name" value="Aa-tRNA-synt_II"/>
</dbReference>
<dbReference type="InterPro" id="IPR006195">
    <property type="entry name" value="aa-tRNA-synth_II"/>
</dbReference>
<dbReference type="InterPro" id="IPR045864">
    <property type="entry name" value="aa-tRNA-synth_II/BPL/LPL"/>
</dbReference>
<dbReference type="InterPro" id="IPR004524">
    <property type="entry name" value="Asp-tRNA-ligase_1"/>
</dbReference>
<dbReference type="InterPro" id="IPR047089">
    <property type="entry name" value="Asp-tRNA-ligase_1_N"/>
</dbReference>
<dbReference type="InterPro" id="IPR002312">
    <property type="entry name" value="Asp/Asn-tRNA-synth_IIb"/>
</dbReference>
<dbReference type="InterPro" id="IPR047090">
    <property type="entry name" value="AspRS_core"/>
</dbReference>
<dbReference type="InterPro" id="IPR004115">
    <property type="entry name" value="GAD-like_sf"/>
</dbReference>
<dbReference type="InterPro" id="IPR029351">
    <property type="entry name" value="GAD_dom"/>
</dbReference>
<dbReference type="InterPro" id="IPR012340">
    <property type="entry name" value="NA-bd_OB-fold"/>
</dbReference>
<dbReference type="InterPro" id="IPR004365">
    <property type="entry name" value="NA-bd_OB_tRNA"/>
</dbReference>
<dbReference type="NCBIfam" id="TIGR00459">
    <property type="entry name" value="aspS_bact"/>
    <property type="match status" value="1"/>
</dbReference>
<dbReference type="NCBIfam" id="NF001750">
    <property type="entry name" value="PRK00476.1"/>
    <property type="match status" value="1"/>
</dbReference>
<dbReference type="PANTHER" id="PTHR22594:SF5">
    <property type="entry name" value="ASPARTATE--TRNA LIGASE, MITOCHONDRIAL"/>
    <property type="match status" value="1"/>
</dbReference>
<dbReference type="PANTHER" id="PTHR22594">
    <property type="entry name" value="ASPARTYL/LYSYL-TRNA SYNTHETASE"/>
    <property type="match status" value="1"/>
</dbReference>
<dbReference type="Pfam" id="PF02938">
    <property type="entry name" value="GAD"/>
    <property type="match status" value="1"/>
</dbReference>
<dbReference type="Pfam" id="PF00152">
    <property type="entry name" value="tRNA-synt_2"/>
    <property type="match status" value="1"/>
</dbReference>
<dbReference type="Pfam" id="PF01336">
    <property type="entry name" value="tRNA_anti-codon"/>
    <property type="match status" value="1"/>
</dbReference>
<dbReference type="PRINTS" id="PR01042">
    <property type="entry name" value="TRNASYNTHASP"/>
</dbReference>
<dbReference type="SUPFAM" id="SSF55681">
    <property type="entry name" value="Class II aaRS and biotin synthetases"/>
    <property type="match status" value="1"/>
</dbReference>
<dbReference type="SUPFAM" id="SSF55261">
    <property type="entry name" value="GAD domain-like"/>
    <property type="match status" value="1"/>
</dbReference>
<dbReference type="SUPFAM" id="SSF50249">
    <property type="entry name" value="Nucleic acid-binding proteins"/>
    <property type="match status" value="1"/>
</dbReference>
<dbReference type="PROSITE" id="PS50862">
    <property type="entry name" value="AA_TRNA_LIGASE_II"/>
    <property type="match status" value="1"/>
</dbReference>
<protein>
    <recommendedName>
        <fullName evidence="1">Aspartate--tRNA(Asp/Asn) ligase</fullName>
        <ecNumber evidence="1">6.1.1.23</ecNumber>
    </recommendedName>
    <alternativeName>
        <fullName evidence="1">Aspartyl-tRNA synthetase</fullName>
        <shortName evidence="1">AspRS</shortName>
    </alternativeName>
    <alternativeName>
        <fullName evidence="1">Non-discriminating aspartyl-tRNA synthetase</fullName>
        <shortName evidence="1">ND-AspRS</shortName>
    </alternativeName>
</protein>
<feature type="chain" id="PRO_1000006651" description="Aspartate--tRNA(Asp/Asn) ligase">
    <location>
        <begin position="1"/>
        <end position="600"/>
    </location>
</feature>
<feature type="region of interest" description="Aspartate" evidence="1">
    <location>
        <begin position="198"/>
        <end position="201"/>
    </location>
</feature>
<feature type="binding site" evidence="1">
    <location>
        <position position="174"/>
    </location>
    <ligand>
        <name>L-aspartate</name>
        <dbReference type="ChEBI" id="CHEBI:29991"/>
    </ligand>
</feature>
<feature type="binding site" evidence="1">
    <location>
        <begin position="220"/>
        <end position="222"/>
    </location>
    <ligand>
        <name>ATP</name>
        <dbReference type="ChEBI" id="CHEBI:30616"/>
    </ligand>
</feature>
<feature type="binding site" evidence="1">
    <location>
        <position position="220"/>
    </location>
    <ligand>
        <name>L-aspartate</name>
        <dbReference type="ChEBI" id="CHEBI:29991"/>
    </ligand>
</feature>
<feature type="binding site" evidence="1">
    <location>
        <position position="229"/>
    </location>
    <ligand>
        <name>ATP</name>
        <dbReference type="ChEBI" id="CHEBI:30616"/>
    </ligand>
</feature>
<feature type="binding site" evidence="1">
    <location>
        <position position="457"/>
    </location>
    <ligand>
        <name>L-aspartate</name>
        <dbReference type="ChEBI" id="CHEBI:29991"/>
    </ligand>
</feature>
<feature type="binding site" evidence="1">
    <location>
        <position position="491"/>
    </location>
    <ligand>
        <name>ATP</name>
        <dbReference type="ChEBI" id="CHEBI:30616"/>
    </ligand>
</feature>
<feature type="binding site" evidence="1">
    <location>
        <position position="498"/>
    </location>
    <ligand>
        <name>L-aspartate</name>
        <dbReference type="ChEBI" id="CHEBI:29991"/>
    </ligand>
</feature>
<feature type="binding site" evidence="1">
    <location>
        <begin position="543"/>
        <end position="546"/>
    </location>
    <ligand>
        <name>ATP</name>
        <dbReference type="ChEBI" id="CHEBI:30616"/>
    </ligand>
</feature>
<feature type="site" description="Important for tRNA non-discrimination" evidence="1">
    <location>
        <position position="32"/>
    </location>
</feature>
<feature type="site" description="Important for tRNA non-discrimination" evidence="1">
    <location>
        <position position="83"/>
    </location>
</feature>
<keyword id="KW-0030">Aminoacyl-tRNA synthetase</keyword>
<keyword id="KW-0067">ATP-binding</keyword>
<keyword id="KW-0963">Cytoplasm</keyword>
<keyword id="KW-0436">Ligase</keyword>
<keyword id="KW-0547">Nucleotide-binding</keyword>
<keyword id="KW-0648">Protein biosynthesis</keyword>
<accession>A3N5V6</accession>